<gene>
    <name type="primary">yibD</name>
    <name type="ordered locus">b3615</name>
    <name type="ordered locus">JW3590</name>
</gene>
<protein>
    <recommendedName>
        <fullName>Uncharacterized glycosyltransferase YibD</fullName>
        <ecNumber>2.4.-.-</ecNumber>
    </recommendedName>
</protein>
<dbReference type="EC" id="2.4.-.-"/>
<dbReference type="EMBL" id="U00039">
    <property type="protein sequence ID" value="AAB18592.1"/>
    <property type="molecule type" value="Genomic_DNA"/>
</dbReference>
<dbReference type="EMBL" id="U00096">
    <property type="protein sequence ID" value="AAC76639.1"/>
    <property type="molecule type" value="Genomic_DNA"/>
</dbReference>
<dbReference type="EMBL" id="AP009048">
    <property type="protein sequence ID" value="BAE77677.1"/>
    <property type="molecule type" value="Genomic_DNA"/>
</dbReference>
<dbReference type="EMBL" id="X06690">
    <property type="protein sequence ID" value="CAA29885.1"/>
    <property type="molecule type" value="Genomic_DNA"/>
</dbReference>
<dbReference type="PIR" id="S47836">
    <property type="entry name" value="Q3ECTH"/>
</dbReference>
<dbReference type="RefSeq" id="NP_418072.1">
    <property type="nucleotide sequence ID" value="NC_000913.3"/>
</dbReference>
<dbReference type="SMR" id="P11290"/>
<dbReference type="BioGRID" id="4263308">
    <property type="interactions" value="109"/>
</dbReference>
<dbReference type="FunCoup" id="P11290">
    <property type="interactions" value="91"/>
</dbReference>
<dbReference type="IntAct" id="P11290">
    <property type="interactions" value="4"/>
</dbReference>
<dbReference type="STRING" id="511145.b3615"/>
<dbReference type="CAZy" id="GT2">
    <property type="family name" value="Glycosyltransferase Family 2"/>
</dbReference>
<dbReference type="PaxDb" id="511145-b3615"/>
<dbReference type="EnsemblBacteria" id="AAC76639">
    <property type="protein sequence ID" value="AAC76639"/>
    <property type="gene ID" value="b3615"/>
</dbReference>
<dbReference type="GeneID" id="948140"/>
<dbReference type="KEGG" id="ecj:JW3590"/>
<dbReference type="KEGG" id="eco:b3615"/>
<dbReference type="KEGG" id="ecoc:C3026_19600"/>
<dbReference type="PATRIC" id="fig|511145.12.peg.3735"/>
<dbReference type="EchoBASE" id="EB1245"/>
<dbReference type="eggNOG" id="COG1216">
    <property type="taxonomic scope" value="Bacteria"/>
</dbReference>
<dbReference type="HOGENOM" id="CLU_025996_25_4_6"/>
<dbReference type="InParanoid" id="P11290"/>
<dbReference type="OMA" id="HQDIPWT"/>
<dbReference type="OrthoDB" id="6813549at2"/>
<dbReference type="PhylomeDB" id="P11290"/>
<dbReference type="BioCyc" id="EcoCyc:EG11266-MONOMER"/>
<dbReference type="BioCyc" id="MetaCyc:EG11266-MONOMER"/>
<dbReference type="PRO" id="PR:P11290"/>
<dbReference type="Proteomes" id="UP000000625">
    <property type="component" value="Chromosome"/>
</dbReference>
<dbReference type="GO" id="GO:0016020">
    <property type="term" value="C:membrane"/>
    <property type="evidence" value="ECO:0000314"/>
    <property type="project" value="EcoCyc"/>
</dbReference>
<dbReference type="GO" id="GO:0015020">
    <property type="term" value="F:glucuronosyltransferase activity"/>
    <property type="evidence" value="ECO:0000315"/>
    <property type="project" value="EcoCyc"/>
</dbReference>
<dbReference type="GO" id="GO:0016036">
    <property type="term" value="P:cellular response to phosphate starvation"/>
    <property type="evidence" value="ECO:0000270"/>
    <property type="project" value="EcoCyc"/>
</dbReference>
<dbReference type="CDD" id="cd00761">
    <property type="entry name" value="Glyco_tranf_GTA_type"/>
    <property type="match status" value="1"/>
</dbReference>
<dbReference type="FunFam" id="3.90.550.10:FF:000097">
    <property type="entry name" value="Glycosyl transferase"/>
    <property type="match status" value="1"/>
</dbReference>
<dbReference type="Gene3D" id="3.90.550.10">
    <property type="entry name" value="Spore Coat Polysaccharide Biosynthesis Protein SpsA, Chain A"/>
    <property type="match status" value="1"/>
</dbReference>
<dbReference type="InterPro" id="IPR001173">
    <property type="entry name" value="Glyco_trans_2-like"/>
</dbReference>
<dbReference type="InterPro" id="IPR029044">
    <property type="entry name" value="Nucleotide-diphossugar_trans"/>
</dbReference>
<dbReference type="NCBIfam" id="NF007482">
    <property type="entry name" value="PRK10073.1"/>
    <property type="match status" value="1"/>
</dbReference>
<dbReference type="PANTHER" id="PTHR22916">
    <property type="entry name" value="GLYCOSYLTRANSFERASE"/>
    <property type="match status" value="1"/>
</dbReference>
<dbReference type="PANTHER" id="PTHR22916:SF51">
    <property type="entry name" value="GLYCOSYLTRANSFERASE EPSH-RELATED"/>
    <property type="match status" value="1"/>
</dbReference>
<dbReference type="Pfam" id="PF00535">
    <property type="entry name" value="Glycos_transf_2"/>
    <property type="match status" value="1"/>
</dbReference>
<dbReference type="SUPFAM" id="SSF53448">
    <property type="entry name" value="Nucleotide-diphospho-sugar transferases"/>
    <property type="match status" value="1"/>
</dbReference>
<reference key="1">
    <citation type="journal article" date="1994" name="Nucleic Acids Res.">
        <title>Analysis of the Escherichia coli genome. V. DNA sequence of the region from 76.0 to 81.5 minutes.</title>
        <authorList>
            <person name="Sofia H.J."/>
            <person name="Burland V."/>
            <person name="Daniels D.L."/>
            <person name="Plunkett G. III"/>
            <person name="Blattner F.R."/>
        </authorList>
    </citation>
    <scope>NUCLEOTIDE SEQUENCE [LARGE SCALE GENOMIC DNA]</scope>
    <source>
        <strain>K12 / MG1655 / ATCC 47076</strain>
    </source>
</reference>
<reference key="2">
    <citation type="journal article" date="1997" name="Science">
        <title>The complete genome sequence of Escherichia coli K-12.</title>
        <authorList>
            <person name="Blattner F.R."/>
            <person name="Plunkett G. III"/>
            <person name="Bloch C.A."/>
            <person name="Perna N.T."/>
            <person name="Burland V."/>
            <person name="Riley M."/>
            <person name="Collado-Vides J."/>
            <person name="Glasner J.D."/>
            <person name="Rode C.K."/>
            <person name="Mayhew G.F."/>
            <person name="Gregor J."/>
            <person name="Davis N.W."/>
            <person name="Kirkpatrick H.A."/>
            <person name="Goeden M.A."/>
            <person name="Rose D.J."/>
            <person name="Mau B."/>
            <person name="Shao Y."/>
        </authorList>
    </citation>
    <scope>NUCLEOTIDE SEQUENCE [LARGE SCALE GENOMIC DNA]</scope>
    <source>
        <strain>K12 / MG1655 / ATCC 47076</strain>
    </source>
</reference>
<reference key="3">
    <citation type="journal article" date="2006" name="Mol. Syst. Biol.">
        <title>Highly accurate genome sequences of Escherichia coli K-12 strains MG1655 and W3110.</title>
        <authorList>
            <person name="Hayashi K."/>
            <person name="Morooka N."/>
            <person name="Yamamoto Y."/>
            <person name="Fujita K."/>
            <person name="Isono K."/>
            <person name="Choi S."/>
            <person name="Ohtsubo E."/>
            <person name="Baba T."/>
            <person name="Wanner B.L."/>
            <person name="Mori H."/>
            <person name="Horiuchi T."/>
        </authorList>
    </citation>
    <scope>NUCLEOTIDE SEQUENCE [LARGE SCALE GENOMIC DNA]</scope>
    <source>
        <strain>K12 / W3110 / ATCC 27325 / DSM 5911</strain>
    </source>
</reference>
<reference key="4">
    <citation type="journal article" date="1989" name="J. Biol. Chem.">
        <title>The primary structure of Escherichia coli L-threonine dehydrogenase.</title>
        <authorList>
            <person name="Aronson B.D."/>
            <person name="Somerville R.L."/>
            <person name="Epperly B.R."/>
            <person name="Dekker E.E."/>
        </authorList>
    </citation>
    <scope>NUCLEOTIDE SEQUENCE [GENOMIC DNA] OF 1-198</scope>
    <source>
        <strain>K12</strain>
    </source>
</reference>
<comment type="similarity">
    <text evidence="1">Belongs to the glycosyltransferase 2 family.</text>
</comment>
<accession>P11290</accession>
<accession>P22999</accession>
<accession>Q2M7S9</accession>
<sequence>MMNSTNKLSVIIPLYNAGDDFRTCMESLITQTWTALEIIIINDGSTDNSVEIAKYYAENYPHVRLLHQANAGASVARNRGIEVATGKYVAFVDADDEVYPTMYETLMTMALEDDLDVAQCNADWCFRETGETWQSIPTDRLRSTGVLTGPDWLRMGLSSRRWTHVVWMGVYRRDVIVKNNIKFIAGLHHQDIVWTTEFMFNALRARYTEQSLYKYYLHNTSVSRLHRQGNKNLNYQRHYIKITRLLEKLNRNYADKIMIYPEFHQQITYEALRVCHAVRKEPDILTRQRMIAEIFTSGMYKRLITNVRSVKVGYQALLWSFRLWQWRDKTRSHHRITRSAFNLR</sequence>
<organism>
    <name type="scientific">Escherichia coli (strain K12)</name>
    <dbReference type="NCBI Taxonomy" id="83333"/>
    <lineage>
        <taxon>Bacteria</taxon>
        <taxon>Pseudomonadati</taxon>
        <taxon>Pseudomonadota</taxon>
        <taxon>Gammaproteobacteria</taxon>
        <taxon>Enterobacterales</taxon>
        <taxon>Enterobacteriaceae</taxon>
        <taxon>Escherichia</taxon>
    </lineage>
</organism>
<proteinExistence type="inferred from homology"/>
<evidence type="ECO:0000305" key="1"/>
<keyword id="KW-0328">Glycosyltransferase</keyword>
<keyword id="KW-1185">Reference proteome</keyword>
<keyword id="KW-0808">Transferase</keyword>
<feature type="chain" id="PRO_0000059238" description="Uncharacterized glycosyltransferase YibD">
    <location>
        <begin position="1"/>
        <end position="344"/>
    </location>
</feature>
<feature type="sequence conflict" description="In Ref. 4; CAA29885." evidence="1" ref="4">
    <original>MMNSTNKLSVIIPLYNAGDDFRTCME</original>
    <variation>MRAMISALVWK</variation>
    <location>
        <begin position="1"/>
        <end position="26"/>
    </location>
</feature>
<feature type="sequence conflict" description="In Ref. 4; CAA29885." evidence="1" ref="4">
    <original>R</original>
    <variation>G</variation>
    <location>
        <position position="77"/>
    </location>
</feature>
<name>YIBD_ECOLI</name>